<feature type="chain" id="PRO_1000064489" description="Esterase FrsA">
    <location>
        <begin position="1"/>
        <end position="414"/>
    </location>
</feature>
<keyword id="KW-0378">Hydrolase</keyword>
<keyword id="KW-1185">Reference proteome</keyword>
<keyword id="KW-0719">Serine esterase</keyword>
<organism>
    <name type="scientific">Shigella dysenteriae serotype 1 (strain Sd197)</name>
    <dbReference type="NCBI Taxonomy" id="300267"/>
    <lineage>
        <taxon>Bacteria</taxon>
        <taxon>Pseudomonadati</taxon>
        <taxon>Pseudomonadota</taxon>
        <taxon>Gammaproteobacteria</taxon>
        <taxon>Enterobacterales</taxon>
        <taxon>Enterobacteriaceae</taxon>
        <taxon>Shigella</taxon>
    </lineage>
</organism>
<protein>
    <recommendedName>
        <fullName evidence="1">Esterase FrsA</fullName>
        <ecNumber evidence="1">3.1.1.1</ecNumber>
    </recommendedName>
</protein>
<accession>Q32J22</accession>
<gene>
    <name evidence="1" type="primary">frsA</name>
    <name type="ordered locus">SDY_0478</name>
</gene>
<evidence type="ECO:0000255" key="1">
    <source>
        <dbReference type="HAMAP-Rule" id="MF_01063"/>
    </source>
</evidence>
<name>FRSA_SHIDS</name>
<comment type="function">
    <text evidence="1">Catalyzes the hydrolysis of esters.</text>
</comment>
<comment type="catalytic activity">
    <reaction evidence="1">
        <text>a carboxylic ester + H2O = an alcohol + a carboxylate + H(+)</text>
        <dbReference type="Rhea" id="RHEA:21164"/>
        <dbReference type="ChEBI" id="CHEBI:15377"/>
        <dbReference type="ChEBI" id="CHEBI:15378"/>
        <dbReference type="ChEBI" id="CHEBI:29067"/>
        <dbReference type="ChEBI" id="CHEBI:30879"/>
        <dbReference type="ChEBI" id="CHEBI:33308"/>
        <dbReference type="EC" id="3.1.1.1"/>
    </reaction>
</comment>
<comment type="similarity">
    <text evidence="1">Belongs to the FrsA family.</text>
</comment>
<sequence>MTQANLSETLFKPRFKHPETSTLVHRFNHGAQPPVQSALDGKTIPHWYRMINRLMWIWRGIDPREILDVQARIVMSDAERTDDDLYDTVIGYRGGNWIYEWATQAMVWQQKACAEEDPQLGGRHWLHAATLYNIAAYPHLKGDDLAEQAQALSNRAYEEAAQRLPGTMRQMEFTVPGGAPITGFLHMPKGDGPFPTVLMCGGLDAMQTDYYSLYERYFAPRGIAMLTIDMPSVGFSSKWKLTQDSSLLHQHVLKALPNVPWVDHTRVAAFGFRFGANVAVRLAYLESPRLKAVACLGPVVHTLLSDFKCQQQVPEMYLDVLASRLGMHDASDEALRVELNRYSLKVQGLLGRRCPTPMLSGYWKNDPFSLEEDSRLITSSSADGKLLEIPFNPVYRNFDKGLQEITDWIEKRLC</sequence>
<reference key="1">
    <citation type="journal article" date="2005" name="Nucleic Acids Res.">
        <title>Genome dynamics and diversity of Shigella species, the etiologic agents of bacillary dysentery.</title>
        <authorList>
            <person name="Yang F."/>
            <person name="Yang J."/>
            <person name="Zhang X."/>
            <person name="Chen L."/>
            <person name="Jiang Y."/>
            <person name="Yan Y."/>
            <person name="Tang X."/>
            <person name="Wang J."/>
            <person name="Xiong Z."/>
            <person name="Dong J."/>
            <person name="Xue Y."/>
            <person name="Zhu Y."/>
            <person name="Xu X."/>
            <person name="Sun L."/>
            <person name="Chen S."/>
            <person name="Nie H."/>
            <person name="Peng J."/>
            <person name="Xu J."/>
            <person name="Wang Y."/>
            <person name="Yuan Z."/>
            <person name="Wen Y."/>
            <person name="Yao Z."/>
            <person name="Shen Y."/>
            <person name="Qiang B."/>
            <person name="Hou Y."/>
            <person name="Yu J."/>
            <person name="Jin Q."/>
        </authorList>
    </citation>
    <scope>NUCLEOTIDE SEQUENCE [LARGE SCALE GENOMIC DNA]</scope>
    <source>
        <strain>Sd197</strain>
    </source>
</reference>
<dbReference type="EC" id="3.1.1.1" evidence="1"/>
<dbReference type="EMBL" id="CP000034">
    <property type="protein sequence ID" value="ABB60685.1"/>
    <property type="molecule type" value="Genomic_DNA"/>
</dbReference>
<dbReference type="RefSeq" id="WP_000189527.1">
    <property type="nucleotide sequence ID" value="NC_007606.1"/>
</dbReference>
<dbReference type="RefSeq" id="YP_402174.1">
    <property type="nucleotide sequence ID" value="NC_007606.1"/>
</dbReference>
<dbReference type="SMR" id="Q32J22"/>
<dbReference type="STRING" id="300267.SDY_0478"/>
<dbReference type="ESTHER" id="shifl-yafa">
    <property type="family name" value="Duf_1100-R"/>
</dbReference>
<dbReference type="EnsemblBacteria" id="ABB60685">
    <property type="protein sequence ID" value="ABB60685"/>
    <property type="gene ID" value="SDY_0478"/>
</dbReference>
<dbReference type="KEGG" id="sdy:SDY_0478"/>
<dbReference type="PATRIC" id="fig|300267.13.peg.563"/>
<dbReference type="HOGENOM" id="CLU_036819_0_0_6"/>
<dbReference type="Proteomes" id="UP000002716">
    <property type="component" value="Chromosome"/>
</dbReference>
<dbReference type="GO" id="GO:0106435">
    <property type="term" value="F:carboxylesterase activity"/>
    <property type="evidence" value="ECO:0007669"/>
    <property type="project" value="UniProtKB-EC"/>
</dbReference>
<dbReference type="FunFam" id="3.40.50.1820:FF:000022">
    <property type="entry name" value="Esterase FrsA"/>
    <property type="match status" value="1"/>
</dbReference>
<dbReference type="Gene3D" id="3.40.50.1820">
    <property type="entry name" value="alpha/beta hydrolase"/>
    <property type="match status" value="1"/>
</dbReference>
<dbReference type="HAMAP" id="MF_01063">
    <property type="entry name" value="FrsA"/>
    <property type="match status" value="1"/>
</dbReference>
<dbReference type="InterPro" id="IPR029058">
    <property type="entry name" value="AB_hydrolase_fold"/>
</dbReference>
<dbReference type="InterPro" id="IPR043423">
    <property type="entry name" value="FrsA"/>
</dbReference>
<dbReference type="InterPro" id="IPR010520">
    <property type="entry name" value="FrsA-like"/>
</dbReference>
<dbReference type="InterPro" id="IPR050261">
    <property type="entry name" value="FrsA_esterase"/>
</dbReference>
<dbReference type="NCBIfam" id="NF003460">
    <property type="entry name" value="PRK05077.1"/>
    <property type="match status" value="1"/>
</dbReference>
<dbReference type="PANTHER" id="PTHR22946">
    <property type="entry name" value="DIENELACTONE HYDROLASE DOMAIN-CONTAINING PROTEIN-RELATED"/>
    <property type="match status" value="1"/>
</dbReference>
<dbReference type="PANTHER" id="PTHR22946:SF4">
    <property type="entry name" value="ESTERASE FRSA"/>
    <property type="match status" value="1"/>
</dbReference>
<dbReference type="Pfam" id="PF06500">
    <property type="entry name" value="FrsA-like"/>
    <property type="match status" value="1"/>
</dbReference>
<dbReference type="SUPFAM" id="SSF53474">
    <property type="entry name" value="alpha/beta-Hydrolases"/>
    <property type="match status" value="1"/>
</dbReference>
<proteinExistence type="inferred from homology"/>